<proteinExistence type="inferred from homology"/>
<dbReference type="EC" id="3.1.26.4" evidence="1"/>
<dbReference type="EMBL" id="CP000450">
    <property type="protein sequence ID" value="ABI60398.1"/>
    <property type="molecule type" value="Genomic_DNA"/>
</dbReference>
<dbReference type="RefSeq" id="WP_011635195.1">
    <property type="nucleotide sequence ID" value="NC_008344.1"/>
</dbReference>
<dbReference type="SMR" id="Q0AE34"/>
<dbReference type="STRING" id="335283.Neut_2176"/>
<dbReference type="KEGG" id="net:Neut_2176"/>
<dbReference type="eggNOG" id="COG0328">
    <property type="taxonomic scope" value="Bacteria"/>
</dbReference>
<dbReference type="HOGENOM" id="CLU_030894_6_0_4"/>
<dbReference type="OrthoDB" id="7845843at2"/>
<dbReference type="Proteomes" id="UP000001966">
    <property type="component" value="Chromosome"/>
</dbReference>
<dbReference type="GO" id="GO:0005737">
    <property type="term" value="C:cytoplasm"/>
    <property type="evidence" value="ECO:0007669"/>
    <property type="project" value="UniProtKB-SubCell"/>
</dbReference>
<dbReference type="GO" id="GO:0000287">
    <property type="term" value="F:magnesium ion binding"/>
    <property type="evidence" value="ECO:0007669"/>
    <property type="project" value="UniProtKB-UniRule"/>
</dbReference>
<dbReference type="GO" id="GO:0003676">
    <property type="term" value="F:nucleic acid binding"/>
    <property type="evidence" value="ECO:0007669"/>
    <property type="project" value="InterPro"/>
</dbReference>
<dbReference type="GO" id="GO:0004523">
    <property type="term" value="F:RNA-DNA hybrid ribonuclease activity"/>
    <property type="evidence" value="ECO:0007669"/>
    <property type="project" value="UniProtKB-UniRule"/>
</dbReference>
<dbReference type="GO" id="GO:0043137">
    <property type="term" value="P:DNA replication, removal of RNA primer"/>
    <property type="evidence" value="ECO:0007669"/>
    <property type="project" value="TreeGrafter"/>
</dbReference>
<dbReference type="CDD" id="cd09278">
    <property type="entry name" value="RNase_HI_prokaryote_like"/>
    <property type="match status" value="1"/>
</dbReference>
<dbReference type="FunFam" id="3.30.420.10:FF:000089">
    <property type="entry name" value="Ribonuclease H"/>
    <property type="match status" value="1"/>
</dbReference>
<dbReference type="Gene3D" id="3.30.420.10">
    <property type="entry name" value="Ribonuclease H-like superfamily/Ribonuclease H"/>
    <property type="match status" value="1"/>
</dbReference>
<dbReference type="HAMAP" id="MF_00042">
    <property type="entry name" value="RNase_H"/>
    <property type="match status" value="1"/>
</dbReference>
<dbReference type="InterPro" id="IPR050092">
    <property type="entry name" value="RNase_H"/>
</dbReference>
<dbReference type="InterPro" id="IPR012337">
    <property type="entry name" value="RNaseH-like_sf"/>
</dbReference>
<dbReference type="InterPro" id="IPR002156">
    <property type="entry name" value="RNaseH_domain"/>
</dbReference>
<dbReference type="InterPro" id="IPR036397">
    <property type="entry name" value="RNaseH_sf"/>
</dbReference>
<dbReference type="InterPro" id="IPR022892">
    <property type="entry name" value="RNaseHI"/>
</dbReference>
<dbReference type="NCBIfam" id="NF001236">
    <property type="entry name" value="PRK00203.1"/>
    <property type="match status" value="1"/>
</dbReference>
<dbReference type="PANTHER" id="PTHR10642">
    <property type="entry name" value="RIBONUCLEASE H1"/>
    <property type="match status" value="1"/>
</dbReference>
<dbReference type="PANTHER" id="PTHR10642:SF26">
    <property type="entry name" value="RIBONUCLEASE H1"/>
    <property type="match status" value="1"/>
</dbReference>
<dbReference type="Pfam" id="PF00075">
    <property type="entry name" value="RNase_H"/>
    <property type="match status" value="1"/>
</dbReference>
<dbReference type="SUPFAM" id="SSF53098">
    <property type="entry name" value="Ribonuclease H-like"/>
    <property type="match status" value="1"/>
</dbReference>
<dbReference type="PROSITE" id="PS50879">
    <property type="entry name" value="RNASE_H_1"/>
    <property type="match status" value="1"/>
</dbReference>
<organism>
    <name type="scientific">Nitrosomonas eutropha (strain DSM 101675 / C91 / Nm57)</name>
    <dbReference type="NCBI Taxonomy" id="335283"/>
    <lineage>
        <taxon>Bacteria</taxon>
        <taxon>Pseudomonadati</taxon>
        <taxon>Pseudomonadota</taxon>
        <taxon>Betaproteobacteria</taxon>
        <taxon>Nitrosomonadales</taxon>
        <taxon>Nitrosomonadaceae</taxon>
        <taxon>Nitrosomonas</taxon>
    </lineage>
</organism>
<accession>Q0AE34</accession>
<gene>
    <name evidence="1" type="primary">rnhA</name>
    <name type="ordered locus">Neut_2176</name>
</gene>
<protein>
    <recommendedName>
        <fullName evidence="1">Ribonuclease H</fullName>
        <shortName evidence="1">RNase H</shortName>
        <ecNumber evidence="1">3.1.26.4</ecNumber>
    </recommendedName>
</protein>
<feature type="chain" id="PRO_0000332636" description="Ribonuclease H">
    <location>
        <begin position="1"/>
        <end position="162"/>
    </location>
</feature>
<feature type="domain" description="RNase H type-1" evidence="2">
    <location>
        <begin position="6"/>
        <end position="154"/>
    </location>
</feature>
<feature type="binding site" evidence="1">
    <location>
        <position position="15"/>
    </location>
    <ligand>
        <name>Mg(2+)</name>
        <dbReference type="ChEBI" id="CHEBI:18420"/>
        <label>1</label>
    </ligand>
</feature>
<feature type="binding site" evidence="1">
    <location>
        <position position="15"/>
    </location>
    <ligand>
        <name>Mg(2+)</name>
        <dbReference type="ChEBI" id="CHEBI:18420"/>
        <label>2</label>
    </ligand>
</feature>
<feature type="binding site" evidence="1">
    <location>
        <position position="53"/>
    </location>
    <ligand>
        <name>Mg(2+)</name>
        <dbReference type="ChEBI" id="CHEBI:18420"/>
        <label>1</label>
    </ligand>
</feature>
<feature type="binding site" evidence="1">
    <location>
        <position position="82"/>
    </location>
    <ligand>
        <name>Mg(2+)</name>
        <dbReference type="ChEBI" id="CHEBI:18420"/>
        <label>1</label>
    </ligand>
</feature>
<feature type="binding site" evidence="1">
    <location>
        <position position="146"/>
    </location>
    <ligand>
        <name>Mg(2+)</name>
        <dbReference type="ChEBI" id="CHEBI:18420"/>
        <label>2</label>
    </ligand>
</feature>
<keyword id="KW-0963">Cytoplasm</keyword>
<keyword id="KW-0255">Endonuclease</keyword>
<keyword id="KW-0378">Hydrolase</keyword>
<keyword id="KW-0460">Magnesium</keyword>
<keyword id="KW-0479">Metal-binding</keyword>
<keyword id="KW-0540">Nuclease</keyword>
<name>RNH_NITEC</name>
<evidence type="ECO:0000255" key="1">
    <source>
        <dbReference type="HAMAP-Rule" id="MF_00042"/>
    </source>
</evidence>
<evidence type="ECO:0000255" key="2">
    <source>
        <dbReference type="PROSITE-ProRule" id="PRU00408"/>
    </source>
</evidence>
<comment type="function">
    <text evidence="1">Endonuclease that specifically degrades the RNA of RNA-DNA hybrids.</text>
</comment>
<comment type="catalytic activity">
    <reaction evidence="1">
        <text>Endonucleolytic cleavage to 5'-phosphomonoester.</text>
        <dbReference type="EC" id="3.1.26.4"/>
    </reaction>
</comment>
<comment type="cofactor">
    <cofactor evidence="1">
        <name>Mg(2+)</name>
        <dbReference type="ChEBI" id="CHEBI:18420"/>
    </cofactor>
    <text evidence="1">Binds 1 Mg(2+) ion per subunit. May bind a second metal ion at a regulatory site, or after substrate binding.</text>
</comment>
<comment type="subunit">
    <text evidence="1">Monomer.</text>
</comment>
<comment type="subcellular location">
    <subcellularLocation>
        <location evidence="1">Cytoplasm</location>
    </subcellularLocation>
</comment>
<comment type="similarity">
    <text evidence="1">Belongs to the RNase H family.</text>
</comment>
<reference key="1">
    <citation type="journal article" date="2007" name="Environ. Microbiol.">
        <title>Whole-genome analysis of the ammonia-oxidizing bacterium, Nitrosomonas eutropha C91: implications for niche adaptation.</title>
        <authorList>
            <person name="Stein L.Y."/>
            <person name="Arp D.J."/>
            <person name="Berube P.M."/>
            <person name="Chain P.S."/>
            <person name="Hauser L."/>
            <person name="Jetten M.S."/>
            <person name="Klotz M.G."/>
            <person name="Larimer F.W."/>
            <person name="Norton J.M."/>
            <person name="Op den Camp H.J.M."/>
            <person name="Shin M."/>
            <person name="Wei X."/>
        </authorList>
    </citation>
    <scope>NUCLEOTIDE SEQUENCE [LARGE SCALE GENOMIC DNA]</scope>
    <source>
        <strain>DSM 101675 / C91 / Nm57</strain>
    </source>
</reference>
<sequence length="162" mass="18502">MQLKSDMKRVEIFTDGACKGNPGPGGWGVCLHFNGETREFFGGEPVTTNNRMELLAAIRALQELESLEDNGQQHLQVQLHTDSQYVQKGISEWIHGWKKRGWRTADKKPVKNEALWRELDDLSQRHQVEWFWVRGHNGHAGNERADRLANQGVESVLSKKAD</sequence>